<reference key="1">
    <citation type="journal article" date="1990" name="Nucleic Acids Res.">
        <title>Nucleotide sequence of Clostridium botulinum C1 neurotoxin.</title>
        <authorList>
            <person name="Hauser D."/>
            <person name="Eklund M.W."/>
            <person name="Kurazona H."/>
            <person name="Binz T."/>
            <person name="Niemann H."/>
            <person name="Gill D.M."/>
            <person name="Boquet P."/>
            <person name="Popoff M.R."/>
        </authorList>
    </citation>
    <scope>NUCLEOTIDE SEQUENCE [GENOMIC DNA]</scope>
    <source>
        <strain>468C / phage c-st / Type C1</strain>
    </source>
</reference>
<reference key="2">
    <citation type="journal article" date="1990" name="Biochem. Biophys. Res. Commun.">
        <title>The complete nucleotide sequence of the gene coding for botulinum type C1 toxin in the C-ST phage genome.</title>
        <authorList>
            <person name="Kimura K."/>
            <person name="Fujii N."/>
            <person name="Tsuzuki K."/>
            <person name="Murakami T."/>
            <person name="Indoh T."/>
            <person name="Yokosawa N."/>
            <person name="Takeshi K."/>
            <person name="Syuto B."/>
            <person name="Oguma K."/>
        </authorList>
    </citation>
    <scope>NUCLEOTIDE SEQUENCE [GENOMIC DNA]</scope>
    <source>
        <strain>Stockholm / Type C / phage C-ST</strain>
    </source>
</reference>
<reference key="3">
    <citation type="journal article" date="2005" name="Avian Dis.">
        <title>Characterization of the neurotoxin produced by isolates associated with avian botulism.</title>
        <authorList>
            <person name="Takeda M."/>
            <person name="Tsukamoto K."/>
            <person name="Kohda T."/>
            <person name="Matsui M."/>
            <person name="Mukamoto M."/>
            <person name="Kozaki S."/>
        </authorList>
    </citation>
    <scope>NUCLEOTIDE SEQUENCE [GENOMIC DNA]</scope>
    <scope>FUNCTION (BOTULINUM NEUROTOXIN TYPE C)</scope>
    <scope>EUKARYOTIC HOST RANGE</scope>
    <scope>SUBUNIT</scope>
    <scope>SUBCELLULAR LOCATION (BOTULINUM NEUROTOXIN C LIGHT CHAIN AND BOTULINUM NEUROTOXIN C HEAVY CHAIN)</scope>
    <source>
        <strain>CB-19 / Type C</strain>
    </source>
</reference>
<reference key="4">
    <citation type="journal article" date="1988" name="Infect. Immun.">
        <title>Establishment of a monoclonal antibody recognizing an antigenic site common to Clostridium botulinum type B, C1, D, and E toxins and tetanus toxin.</title>
        <authorList>
            <person name="Tsuzuki K."/>
            <person name="Yokosawa N."/>
            <person name="Syuto B."/>
            <person name="Ohishi I."/>
            <person name="Fujii N."/>
            <person name="Kimura K."/>
            <person name="Oguma K."/>
        </authorList>
    </citation>
    <scope>PROTEIN SEQUENCE OF 2-26</scope>
    <source>
        <strain>Stockholm / Type C</strain>
    </source>
</reference>
<reference key="5">
    <citation type="journal article" date="1986" name="Biochemistry">
        <title>Ion-conducting channels produced by botulinum toxin in planar lipid membranes.</title>
        <authorList>
            <person name="Donovan J.J."/>
            <person name="Middlebrook J.L."/>
        </authorList>
    </citation>
    <scope>FUNCTION (BOTULINUM NEUROTOXIN TYPE C)</scope>
    <source>
        <strain>Type C</strain>
    </source>
</reference>
<reference key="6">
    <citation type="journal article" date="1990" name="Lancet">
        <title>Infant botulism due to Clostridium botulinum type C toxin.</title>
        <authorList>
            <person name="Oguma K."/>
            <person name="Yokota K."/>
            <person name="Hayashi S."/>
            <person name="Takeshi K."/>
            <person name="Kumagai M."/>
            <person name="Itoh N."/>
            <person name="Tachi N."/>
            <person name="Chiba S."/>
        </authorList>
    </citation>
    <scope>EUKARYOTIC HOST RANGE</scope>
    <source>
        <strain>Type C</strain>
    </source>
</reference>
<reference key="7">
    <citation type="journal article" date="1993" name="EMBO J.">
        <title>Botulinum neurotoxin C1 blocks neurotransmitter release by means of cleaving HPC-1/syntaxin.</title>
        <authorList>
            <person name="Blasi J."/>
            <person name="Chapman E.R."/>
            <person name="Yamasaki S."/>
            <person name="Binz T."/>
            <person name="Niemann H."/>
            <person name="Jahn R."/>
        </authorList>
    </citation>
    <scope>FUNCTION (BOTULINUM NEUROTOXIN TYPE C)</scope>
    <scope>IDENTIFICATION OF SUBSTRATE</scope>
    <scope>ACTIVITY REGULATION</scope>
    <scope>SUBCELLULAR LOCATION (BOTULINUM NEUROTOXIN C LIGHT CHAIN)</scope>
</reference>
<reference key="8">
    <citation type="journal article" date="1994" name="Biochem. Biophys. Res. Commun.">
        <title>Molecular construction of Clostridium botulinum type C progenitor toxin and its gene organization.</title>
        <authorList>
            <person name="Fujinaga Y."/>
            <person name="Inoue K."/>
            <person name="Shimazaki S."/>
            <person name="Tomochika K."/>
            <person name="Tsuzuki K."/>
            <person name="Fujii N."/>
            <person name="Watanabe T."/>
            <person name="Ohyama T."/>
            <person name="Takeshi K."/>
            <person name="Inoue K."/>
            <person name="Oguma K."/>
        </authorList>
    </citation>
    <scope>SUBUNIT</scope>
    <scope>SUBCELLULAR LOCATION (BOTULINUM NEUROTOXIN C LIGHT CHAIN AND BOTULINUM NEUROTOXIN C HEAVY CHAIN)</scope>
    <source>
        <strain>Stockholm / Type C / phage C-ST</strain>
    </source>
</reference>
<reference key="9">
    <citation type="journal article" date="1995" name="J. Biol. Chem.">
        <title>Botulinum neurotoxin type C cleaves a single Lys-Ala bond within the carboxyl-terminal region of syntaxins.</title>
        <authorList>
            <person name="Schiavo G."/>
            <person name="Shone C.C."/>
            <person name="Bennett M.K."/>
            <person name="Scheller R.H."/>
            <person name="Montecucco C."/>
        </authorList>
    </citation>
    <scope>FUNCTION (BOTULINUM NEUROTOXIN C LIGHT CHAIN)</scope>
    <scope>IDENTIFICATION OF SUBSTRATE</scope>
    <scope>CATALYTIC ACTIVITY</scope>
    <scope>COFACTOR</scope>
    <scope>ACTIVITY REGULATION</scope>
    <scope>SUBCELLULAR LOCATION (BOTULINUM NEUROTOXIN C LIGHT CHAIN)</scope>
    <source>
        <strain>NCTC 8264 / Type C</strain>
    </source>
</reference>
<reference key="10">
    <citation type="journal article" date="1996" name="Biochemistry">
        <title>Botulinum neurotoxin C1 cleaves both syntaxin and SNAP-25 in intact and permeabilized chromaffin cells: correlation with its blockade of catecholamine release.</title>
        <authorList>
            <person name="Foran P."/>
            <person name="Lawrence G.W."/>
            <person name="Shone C.C."/>
            <person name="Foster K.A."/>
            <person name="Dolly J.O."/>
        </authorList>
    </citation>
    <scope>FUNCTION (BOTULINUM NEUROTOXIN TYPE C)</scope>
    <scope>IDENTIFICATION OF SUBSTRATE</scope>
    <scope>CATALYTIC ACTIVITY</scope>
    <scope>ACTIVITY REGULATION</scope>
    <source>
        <strain>Type C1</strain>
    </source>
</reference>
<reference key="11">
    <citation type="journal article" date="1997" name="Neurosci. Lett.">
        <title>Botulinum neurotoxin serotype C: a novel effective botulinum toxin therapy in human.</title>
        <authorList>
            <person name="Eleopra R."/>
            <person name="Tugnoli V."/>
            <person name="Rossetto O."/>
            <person name="Montecucco C."/>
            <person name="De Grandis D."/>
        </authorList>
    </citation>
    <scope>PHARMACEUTICAL</scope>
</reference>
<reference key="12">
    <citation type="journal article" date="1999" name="J. Neurochem.">
        <title>Proteolysis of SNAP-25 isoforms by botulinum neurotoxin types A, C, and E: domains and amino acid residues controlling the formation of enzyme-substrate complexes and cleavage.</title>
        <authorList>
            <person name="Vaidyanathan V.V."/>
            <person name="Yoshino K."/>
            <person name="Jahnz M."/>
            <person name="Doerries C."/>
            <person name="Bade S."/>
            <person name="Nauenburg S."/>
            <person name="Niemann H."/>
            <person name="Binz T."/>
        </authorList>
    </citation>
    <scope>FUNCTION (BOTULINUM NEUROTOXIN C LIGHT CHAIN)</scope>
    <scope>IDENTIFICATION OF SUBSTRATE</scope>
    <scope>CATALYTIC ACTIVITY</scope>
    <source>
        <strain>Type C</strain>
    </source>
</reference>
<reference key="13">
    <citation type="journal article" date="2005" name="J. Biol. Chem.">
        <title>Binding of Clostridium botulinum type C and D neurotoxins to ganglioside and phospholipid. Novel insights into the receptor for clostridial neurotoxins.</title>
        <authorList>
            <person name="Tsukamoto K."/>
            <person name="Kohda T."/>
            <person name="Mukamoto M."/>
            <person name="Takeuchi K."/>
            <person name="Ihara H."/>
            <person name="Saito M."/>
            <person name="Kozaki S."/>
        </authorList>
    </citation>
    <scope>FUNCTION (BOTULINUM NEUROTOXIN C HEAVY CHAIN)</scope>
    <scope>GANGLIOSIDE-BINDING</scope>
    <source>
        <strain>CB-19 / Type C</strain>
    </source>
</reference>
<reference key="14">
    <citation type="journal article" date="2009" name="J. Neurochem.">
        <title>Botulinum neurotoxins C, E and F bind gangliosides via a conserved binding site prior to stimulation-dependent uptake with botulinum neurotoxin F utilising the three isoforms of SV2 as second receptor.</title>
        <authorList>
            <person name="Rummel A."/>
            <person name="Haefner K."/>
            <person name="Mahrhold S."/>
            <person name="Darashchonak N."/>
            <person name="Holt M."/>
            <person name="Jahn R."/>
            <person name="Beermann S."/>
            <person name="Karnath T."/>
            <person name="Bigalke H."/>
            <person name="Binz T."/>
        </authorList>
    </citation>
    <scope>FUNCTION (BOTULINUM NEUROTOXIN TYPE C)</scope>
    <scope>FUNCTION (BOTULINUM NEUROTOXIN C HEAVY CHAIN)</scope>
    <scope>GANGLIOSIDE-BINDING</scope>
    <scope>MUTAGENESIS OF TRP-1258</scope>
    <source>
        <strain>468C / phage c-st / Type C1</strain>
    </source>
</reference>
<reference key="15">
    <citation type="journal article" date="2011" name="PLoS Pathog.">
        <title>Botulinum neurotoxin D uses synaptic vesicle protein SV2 and gangliosides as receptors.</title>
        <authorList>
            <person name="Peng L."/>
            <person name="Tepp W.H."/>
            <person name="Johnson E.A."/>
            <person name="Dong M."/>
        </authorList>
    </citation>
    <scope>FUNCTION (BOTULINUM NEUROTOXIN TYPE C)</scope>
    <scope>POSSIBLE LACK OF PROTEINACEOUS RECEPTOR</scope>
    <source>
        <strain>Type C</strain>
    </source>
</reference>
<reference key="16">
    <citation type="journal article" date="2012" name="Biochimie">
        <title>The receptor binding domain of botulinum neurotoxin serotype C binds phosphoinositides.</title>
        <authorList>
            <person name="Zhang Y."/>
            <person name="Varnum S.M."/>
        </authorList>
    </citation>
    <scope>FUNCTION (BOTULINUM NEUROTOXIN C HEAVY CHAIN)</scope>
    <scope>DOMAIN</scope>
    <scope>PHOSPHOINOSITIDE-BINDING</scope>
</reference>
<reference key="17">
    <citation type="journal article" date="2012" name="J. Biol. Chem.">
        <title>Botulinum neurotoxin serotype C associates with dual ganglioside receptors to facilitate cell entry.</title>
        <authorList>
            <person name="Karalewitz A.P."/>
            <person name="Fu Z."/>
            <person name="Baldwin M.R."/>
            <person name="Kim J.J."/>
            <person name="Barbieri J.T."/>
        </authorList>
    </citation>
    <scope>FUNCTION (BOTULINUM NEUROTOXIN C HEAVY CHAIN)</scope>
    <scope>SUBCELLULAR LOCATION (BOTULINUM NEUROTOXIN C HEAVY CHAIN)</scope>
    <scope>GANGLIOSIDE-BINDING</scope>
    <scope>MUTAGENESIS OF TYR-1119; ALA-1126 AND HIS-1193</scope>
    <source>
        <strain>Stockholm / Type C</strain>
    </source>
</reference>
<reference key="18">
    <citation type="journal article" date="2017" name="Pharmacol. Rev.">
        <title>Botulinum neurotoxins: Biology, pharmacology, and toxicology.</title>
        <authorList>
            <person name="Pirazzini M."/>
            <person name="Rossetto O."/>
            <person name="Eleopra R."/>
            <person name="Montecucco C."/>
        </authorList>
    </citation>
    <scope>REVIEW</scope>
</reference>
<reference evidence="39" key="19">
    <citation type="journal article" date="2007" name="Biochemistry">
        <title>Structural and biochemical studies of botulinum neurotoxin serotype C1 light chain protease: implications for dual substrate specificity.</title>
        <authorList>
            <person name="Jin R."/>
            <person name="Sikorra S."/>
            <person name="Stegmann C.M."/>
            <person name="Pich A."/>
            <person name="Binz T."/>
            <person name="Brunger A.T."/>
        </authorList>
    </citation>
    <scope>X-RAY CRYSTALLOGRAPHY (1.75 ANGSTROMS) OF 1-427 IN COMPLEX WITH ZINC</scope>
    <scope>FUNCTION (BOTULINUM NEUROTOXIN C LIGHT CHAIN)</scope>
    <scope>COFACTOR</scope>
    <scope>BIOPHYSICOCHEMICAL PROPERTIES</scope>
    <source>
        <strain>Type C</strain>
    </source>
</reference>
<reference evidence="40" key="20">
    <citation type="submission" date="2008-06" db="PDB data bank">
        <title>Crystal structure of apo form (zinc removed) of the botulinum neurotoxin type C light chain.</title>
        <authorList>
            <person name="Rawat R."/>
            <person name="Kumaran D."/>
            <person name="Swaminathan S."/>
        </authorList>
    </citation>
    <scope>X-RAY CRYSTALLOGRAPHY (1.95 ANGSTROMS) OF 1-430 IN APO-FORM</scope>
    <source>
        <strain>Type C</strain>
    </source>
</reference>
<reference evidence="41" key="21">
    <citation type="journal article" date="2010" name="Biochemistry">
        <title>Identification of a unique ganglioside binding loop within botulinum neurotoxins C and D-SA.</title>
        <authorList>
            <person name="Karalewitz A.P."/>
            <person name="Kroken A.R."/>
            <person name="Fu Z."/>
            <person name="Baldwin M.R."/>
            <person name="Kim J.J."/>
            <person name="Barbieri J.T."/>
        </authorList>
    </citation>
    <scope>X-RAY CRYSTALLOGRAPHY (2.50 ANGSTROMS) OF 866-1291</scope>
    <scope>FUNCTION (BOTULINUM NEUROTOXIN C HEAVY CHAIN)</scope>
    <scope>DOMAIN</scope>
    <scope>GANGLIOSIDE-BINDING</scope>
    <scope>MUTAGENESIS OF TRP-1258</scope>
    <source>
        <strain>Type C / Stockholm / phage C-ST</strain>
    </source>
</reference>
<reference evidence="42 43" key="22">
    <citation type="journal article" date="2011" name="Mol. Microbiol.">
        <title>The biological activity of botulinum neurotoxin type C is dependent upon novel types of ganglioside binding sites.</title>
        <authorList>
            <person name="Strotmeier J."/>
            <person name="Gu S."/>
            <person name="Jutzi S."/>
            <person name="Mahrhold S."/>
            <person name="Zhou J."/>
            <person name="Pich A."/>
            <person name="Eichner T."/>
            <person name="Bigalke H."/>
            <person name="Rummel A."/>
            <person name="Jin R."/>
            <person name="Binz T."/>
        </authorList>
    </citation>
    <scope>X-RAY CRYSTALLOGRAPHY (2.15 ANGSTROMS) OF 867-1291 WITH AND WITHOUT SIALIC ACID</scope>
    <scope>FUNCTION (BOTULINUM NEUROTOXIN C HEAVY CHAIN)</scope>
    <scope>MUTAGENESIS OF TYR-1146; TYR-1179; LEU-1203; 1258-TRP-TYR-1259; TRP-1258 AND SER-1281</scope>
</reference>
<organism>
    <name type="scientific">Clostridium botulinum C phage</name>
    <name type="common">Clostridium botulinum C bacteriophage</name>
    <dbReference type="NCBI Taxonomy" id="12336"/>
    <lineage>
        <taxon>Viruses</taxon>
        <taxon>Duplodnaviria</taxon>
        <taxon>Heunggongvirae</taxon>
        <taxon>Uroviricota</taxon>
        <taxon>Caudoviricetes</taxon>
    </lineage>
</organism>
<sequence length="1291" mass="148870">MPITINNFNYSDPVDNKNILYLDTHLNTLANEPEKAFRITGNIWVIPDRFSRNSNPNLNKPPRVTSPKSGYYDPNYLSTDSDKDTFLKEIIKLFKRINSREIGEELIYRLSTDIPFPGNNNTPINTFDFDVDFNSVDVKTRQGNNWVKTGSINPSVIITGPRENIIDPETSTFKLTNNTFAAQEGFGALSIISISPRFMLTYSNATNDVGEGRFSKSEFCMDPILILMHELNHAMHNLYGIAIPNDQTISSVTSNIFYSQYNVKLEYAEIYAFGGPTIDLIPKSARKYFEEKALDYYRSIAKRLNSITTANPSSFNKYIGEYKQKLIRKYRFVVESSGEVTVNRNKFVELYNELTQIFTEFNYAKIYNVQNRKIYLSNVYTPVTANILDDNVYDIQNGFNIPKSNLNVLFMGQNLSRNPALRKVNPENMLYLFTKFCHKAIDGRSLYNKTLDCRELLVKNTDLPFIGDISDVKTDIFLRKDINEETEVIYYPDNVSVDQVILSKNTSEHGQLDLLYPSIDSESEILPGENQVFYDNRTQNVDYLNSYYYLESQKLSDNVEDFTFTRSIEEALDNSAKVYTYFPTLANKVNAGVQGGLFLMWANDVVEDFTTNILRKDTLDKISDVSAIIPYIGPALNISNSVRRGNFTEAFAVTGVTILLEAFPEFTIPALGAFVIYSKVQERNEIIKTIDNCLEQRIKRWKDSYEWMMGTWLSRIITQFNNISYQMYDSLNYQAGAIKAKIDLEYKKYSGSDKENIKSQVENLKNSLDVKISEAMNNINKFIRECSVTYLFKNMLPKVIDELNEFDRNTKAKLINLIDSHNIILVGEVDKLKAKVNNSFQNTIPFNIFSYTNNSLLKDIINEYFNNINDSKILSLQNRKNTLVDTSGYNAEVSEEGDVQLNPIFPFDFKLGSSGEDRGKVIVTQNENIVYNSMYESFSISFWIRINKWVSNLPGYTIIDSVKNNSGWSIGIISNFLVFTLKQNEDSEQSINFSYDISNNAPGYNKWFFVTVTNNMMGNMKIYINGKLIDTIKVKELTGINFSKTITFEINKIPDTGLITSDSDNINMWIRDFYIFAKELDGKDINILFNSLQYTNVVKDYWGNDLRYNKEYYMVNIDYLNRYMYANSRQIVFNTRRNNNDFNEGYKIIIKRIRGNTNDTRVRGGDILYFDMTINNKAYNLFMKNETMYADNHSTEDIYAIGLREQTKDINDNIIFQIQPMNNTYYYASQIFKSNFNGENISGICSIGTYRFRLGGDWYRHNYLVPTVKQGNYASLLESTSTHWGFVPVSE</sequence>
<protein>
    <recommendedName>
        <fullName>Botulinum neurotoxin type C</fullName>
        <shortName>BoNT/C</shortName>
    </recommendedName>
    <alternativeName>
        <fullName>Bontoxilysin-C1</fullName>
        <shortName evidence="23">BoNT/C1</shortName>
    </alternativeName>
    <alternativeName>
        <fullName>Botulinum neurotoxin type C1</fullName>
    </alternativeName>
    <component>
        <recommendedName>
            <fullName>Botulinum neurotoxin C light chain</fullName>
            <shortName>LC</shortName>
            <ecNumber evidence="17">3.4.24.69</ecNumber>
        </recommendedName>
    </component>
    <component>
        <recommendedName>
            <fullName>Botulinum neurotoxin C heavy chain</fullName>
            <shortName>HC</shortName>
        </recommendedName>
    </component>
</protein>
<feature type="initiator methionine" description="Removed" evidence="16">
    <location>
        <position position="1"/>
    </location>
</feature>
<feature type="chain" id="PRO_0000444905" description="Botulinum neurotoxin type C">
    <location>
        <begin position="2"/>
        <end position="1291"/>
    </location>
</feature>
<feature type="chain" id="PRO_0000029217" description="Botulinum neurotoxin C light chain">
    <location>
        <begin position="2"/>
        <end position="449"/>
    </location>
</feature>
<feature type="chain" id="PRO_0000029218" description="Botulinum neurotoxin C heavy chain">
    <location>
        <begin position="450"/>
        <end position="1291"/>
    </location>
</feature>
<feature type="region of interest" description="Translocation domain (TD)" evidence="1">
    <location>
        <begin position="450"/>
        <end position="865"/>
    </location>
</feature>
<feature type="region of interest" description="Belt" evidence="2">
    <location>
        <begin position="490"/>
        <end position="541"/>
    </location>
</feature>
<feature type="region of interest" description="N-terminus of receptor binding domain (N-RBD)" evidence="1">
    <location>
        <begin position="866"/>
        <end position="1093"/>
    </location>
</feature>
<feature type="region of interest" description="C-terminus of receptor binding domain (C-RBD)" evidence="1">
    <location>
        <begin position="1094"/>
        <end position="1291"/>
    </location>
</feature>
<feature type="region of interest" description="Ganglioside-binding loop" evidence="29 30">
    <location>
        <begin position="1269"/>
        <end position="1283"/>
    </location>
</feature>
<feature type="short sequence motif" description="Host ganglioside-binding motif" evidence="2 28">
    <location>
        <begin position="1256"/>
        <end position="1258"/>
    </location>
</feature>
<feature type="active site" evidence="4">
    <location>
        <position position="230"/>
    </location>
</feature>
<feature type="binding site" evidence="4 7 39">
    <location>
        <position position="229"/>
    </location>
    <ligand>
        <name>Zn(2+)</name>
        <dbReference type="ChEBI" id="CHEBI:29105"/>
        <note>catalytic</note>
    </ligand>
</feature>
<feature type="binding site" evidence="4 7 39">
    <location>
        <position position="233"/>
    </location>
    <ligand>
        <name>Zn(2+)</name>
        <dbReference type="ChEBI" id="CHEBI:29105"/>
        <note>catalytic</note>
    </ligand>
</feature>
<feature type="binding site" evidence="7 39">
    <location>
        <position position="269"/>
    </location>
    <ligand>
        <name>Zn(2+)</name>
        <dbReference type="ChEBI" id="CHEBI:29105"/>
        <note>catalytic</note>
    </ligand>
</feature>
<feature type="binding site" description="GBP2 binding site" evidence="33">
    <location>
        <position position="1119"/>
    </location>
    <ligand>
        <name>a ganglioside GD1a (d18:1(4E))</name>
        <dbReference type="ChEBI" id="CHEBI:78445"/>
    </ligand>
</feature>
<feature type="binding site" description="Sia-1 binding site" evidence="30 42">
    <location>
        <begin position="1126"/>
        <end position="1129"/>
    </location>
    <ligand>
        <name>a ganglioside GD1b (d18:1(4E))</name>
        <dbReference type="ChEBI" id="CHEBI:87785"/>
    </ligand>
</feature>
<feature type="binding site" description="Sia-1 binding site" evidence="30 42">
    <location>
        <position position="1146"/>
    </location>
    <ligand>
        <name>a ganglioside GD1b (d18:1(4E))</name>
        <dbReference type="ChEBI" id="CHEBI:87785"/>
    </ligand>
</feature>
<feature type="binding site" description="GBP2 binding site" evidence="33">
    <location>
        <begin position="1247"/>
        <end position="1250"/>
    </location>
    <ligand>
        <name>a ganglioside GD1a (d18:1(4E))</name>
        <dbReference type="ChEBI" id="CHEBI:78445"/>
    </ligand>
</feature>
<feature type="binding site" description="GBP2 binding site" evidence="33">
    <location>
        <position position="1281"/>
    </location>
    <ligand>
        <name>a ganglioside GD1a (d18:1(4E))</name>
        <dbReference type="ChEBI" id="CHEBI:78445"/>
    </ligand>
</feature>
<feature type="disulfide bond" description="Interchain (between light and heavy chains)" evidence="2 24">
    <location>
        <begin position="437"/>
        <end position="453"/>
    </location>
</feature>
<feature type="mutagenesis site" description="Receptor-binding domain (RBD) no longer binds eukaryotic gangliosides GD1a or GM1a, reduced GT1b binding, GD1b binding unaffected. RBD fragment enters neurons but does not compartmentalize normally; uptake is not stimulated by K(+)." evidence="14">
    <original>Y</original>
    <variation>A</variation>
    <location>
        <position position="1119"/>
    </location>
</feature>
<feature type="mutagenesis site" description="Receptor-binding domain (RBD) no longer binds eukaryotic gangliosides GM1a, GD1b, reduced binding of GD1a and GT1b. RBD fragment does not enter neurons; uptake is not stimulated by K(+)." evidence="14">
    <original>A</original>
    <variation>K</variation>
    <location>
        <position position="1126"/>
    </location>
</feature>
<feature type="mutagenesis site" description="Whole toxin has dramatically reduced toxicity." evidence="12">
    <original>Y</original>
    <variation>A</variation>
    <location>
        <position position="1146"/>
    </location>
</feature>
<feature type="mutagenesis site" description="Receptor-binding domain (RBD) has decreased binding to neurons. Greatly decreased binding to neurons; when associated with L-1258. Whole toxin has greatly decreased toxicity, even less toxic; when associated with L-1258. Decreased binding to mixed gangliosides, even less binding to mixed gangliosides; when associated with L-1258." evidence="12">
    <original>Y</original>
    <variation>S</variation>
    <location>
        <position position="1179"/>
    </location>
</feature>
<feature type="mutagenesis site" description="No effect on receptor-binding domain (RBD) binding to eukaryotic gangliosides." evidence="14">
    <original>H</original>
    <variation>A</variation>
    <location>
        <position position="1193"/>
    </location>
</feature>
<feature type="mutagenesis site" description="Receptor-binding domain (RBD) has decreased binding to neurons. Whole toxin has greatly decreased toxicity. Decreased binding to mixed gangliosides." evidence="12">
    <original>L</original>
    <variation>F</variation>
    <location>
        <position position="1203"/>
    </location>
</feature>
<feature type="mutagenesis site" description="Whole toxin has greatly decreased toxicity." evidence="12">
    <original>WY</original>
    <variation>AA</variation>
    <location>
        <begin position="1258"/>
        <end position="1259"/>
    </location>
</feature>
<feature type="mutagenesis site" description="Receptor-binding domain (RBD) has greatly reduced binding of ganglioside GD1b, no longer binds neurons." evidence="10">
    <original>W</original>
    <variation>A</variation>
    <location>
        <position position="1258"/>
    </location>
</feature>
<feature type="mutagenesis site" description="Receptor-binding domain (RBD) has decreased binding to neurons (Ref.16). Greatly decreased binding to neurons; when associated with S-1179. Whole toxin has greatly decreased toxicity, even less toxic; when associated with S-1179. Decreased binding to mixed gangliosides, even less binding to mixed gangliosides; when associated with S-1179." evidence="8 12">
    <original>W</original>
    <variation>L</variation>
    <location>
        <position position="1258"/>
    </location>
</feature>
<feature type="mutagenesis site" description="Receptor-binding domain (RBD) has decreased binding to neurons. Whole toxin has decreased toxicity and decreased binding to mixed gangliosides." evidence="12">
    <original>S</original>
    <variation>Y</variation>
    <location>
        <position position="1281"/>
    </location>
</feature>
<feature type="sequence conflict" description="In Ref. 1; CAA37780." ref="1">
    <original>T</original>
    <variation>P</variation>
    <location>
        <position position="85"/>
    </location>
</feature>
<feature type="strand" evidence="44">
    <location>
        <begin position="16"/>
        <end position="23"/>
    </location>
</feature>
<feature type="strand" evidence="44">
    <location>
        <begin position="34"/>
        <end position="40"/>
    </location>
</feature>
<feature type="strand" evidence="44">
    <location>
        <begin position="43"/>
        <end position="46"/>
    </location>
</feature>
<feature type="strand" evidence="44">
    <location>
        <begin position="53"/>
        <end position="55"/>
    </location>
</feature>
<feature type="turn" evidence="44">
    <location>
        <begin position="74"/>
        <end position="77"/>
    </location>
</feature>
<feature type="helix" evidence="44">
    <location>
        <begin position="80"/>
        <end position="97"/>
    </location>
</feature>
<feature type="helix" evidence="44">
    <location>
        <begin position="101"/>
        <end position="112"/>
    </location>
</feature>
<feature type="strand" evidence="44">
    <location>
        <begin position="126"/>
        <end position="128"/>
    </location>
</feature>
<feature type="strand" evidence="44">
    <location>
        <begin position="134"/>
        <end position="141"/>
    </location>
</feature>
<feature type="strand" evidence="44">
    <location>
        <begin position="143"/>
        <end position="152"/>
    </location>
</feature>
<feature type="strand" evidence="44">
    <location>
        <begin position="155"/>
        <end position="159"/>
    </location>
</feature>
<feature type="strand" evidence="44">
    <location>
        <begin position="169"/>
        <end position="171"/>
    </location>
</feature>
<feature type="helix" evidence="44">
    <location>
        <begin position="181"/>
        <end position="183"/>
    </location>
</feature>
<feature type="strand" evidence="44">
    <location>
        <begin position="184"/>
        <end position="186"/>
    </location>
</feature>
<feature type="strand" evidence="44">
    <location>
        <begin position="190"/>
        <end position="193"/>
    </location>
</feature>
<feature type="strand" evidence="44">
    <location>
        <begin position="201"/>
        <end position="207"/>
    </location>
</feature>
<feature type="helix" evidence="44">
    <location>
        <begin position="223"/>
        <end position="238"/>
    </location>
</feature>
<feature type="strand" evidence="44">
    <location>
        <begin position="248"/>
        <end position="253"/>
    </location>
</feature>
<feature type="strand" evidence="44">
    <location>
        <begin position="256"/>
        <end position="258"/>
    </location>
</feature>
<feature type="strand" evidence="44">
    <location>
        <begin position="260"/>
        <end position="266"/>
    </location>
</feature>
<feature type="helix" evidence="44">
    <location>
        <begin position="267"/>
        <end position="273"/>
    </location>
</feature>
<feature type="helix" evidence="44">
    <location>
        <begin position="275"/>
        <end position="280"/>
    </location>
</feature>
<feature type="helix" evidence="44">
    <location>
        <begin position="283"/>
        <end position="304"/>
    </location>
</feature>
<feature type="strand" evidence="44">
    <location>
        <begin position="309"/>
        <end position="312"/>
    </location>
</feature>
<feature type="helix" evidence="44">
    <location>
        <begin position="313"/>
        <end position="318"/>
    </location>
</feature>
<feature type="helix" evidence="44">
    <location>
        <begin position="319"/>
        <end position="330"/>
    </location>
</feature>
<feature type="helix" evidence="44">
    <location>
        <begin position="344"/>
        <end position="356"/>
    </location>
</feature>
<feature type="helix" evidence="44">
    <location>
        <begin position="360"/>
        <end position="366"/>
    </location>
</feature>
<feature type="strand" evidence="44">
    <location>
        <begin position="372"/>
        <end position="374"/>
    </location>
</feature>
<feature type="turn" evidence="44">
    <location>
        <begin position="390"/>
        <end position="392"/>
    </location>
</feature>
<feature type="turn" evidence="44">
    <location>
        <begin position="395"/>
        <end position="397"/>
    </location>
</feature>
<feature type="helix" evidence="44">
    <location>
        <begin position="402"/>
        <end position="404"/>
    </location>
</feature>
<feature type="helix" evidence="44">
    <location>
        <begin position="411"/>
        <end position="413"/>
    </location>
</feature>
<feature type="turn" evidence="44">
    <location>
        <begin position="415"/>
        <end position="417"/>
    </location>
</feature>
<feature type="helix" evidence="45">
    <location>
        <begin position="426"/>
        <end position="428"/>
    </location>
</feature>
<feature type="helix" evidence="47">
    <location>
        <begin position="867"/>
        <end position="870"/>
    </location>
</feature>
<feature type="strand" evidence="47">
    <location>
        <begin position="872"/>
        <end position="878"/>
    </location>
</feature>
<feature type="strand" evidence="47">
    <location>
        <begin position="880"/>
        <end position="885"/>
    </location>
</feature>
<feature type="strand" evidence="47">
    <location>
        <begin position="887"/>
        <end position="889"/>
    </location>
</feature>
<feature type="strand" evidence="47">
    <location>
        <begin position="892"/>
        <end position="898"/>
    </location>
</feature>
<feature type="strand" evidence="47">
    <location>
        <begin position="909"/>
        <end position="915"/>
    </location>
</feature>
<feature type="strand" evidence="46">
    <location>
        <begin position="916"/>
        <end position="918"/>
    </location>
</feature>
<feature type="strand" evidence="47">
    <location>
        <begin position="920"/>
        <end position="924"/>
    </location>
</feature>
<feature type="helix" evidence="47">
    <location>
        <begin position="927"/>
        <end position="933"/>
    </location>
</feature>
<feature type="turn" evidence="47">
    <location>
        <begin position="934"/>
        <end position="936"/>
    </location>
</feature>
<feature type="strand" evidence="47">
    <location>
        <begin position="937"/>
        <end position="947"/>
    </location>
</feature>
<feature type="strand" evidence="47">
    <location>
        <begin position="956"/>
        <end position="963"/>
    </location>
</feature>
<feature type="strand" evidence="47">
    <location>
        <begin position="966"/>
        <end position="973"/>
    </location>
</feature>
<feature type="strand" evidence="47">
    <location>
        <begin position="976"/>
        <end position="984"/>
    </location>
</feature>
<feature type="strand" evidence="47">
    <location>
        <begin position="987"/>
        <end position="994"/>
    </location>
</feature>
<feature type="helix" evidence="47">
    <location>
        <begin position="997"/>
        <end position="999"/>
    </location>
</feature>
<feature type="strand" evidence="47">
    <location>
        <begin position="1008"/>
        <end position="1015"/>
    </location>
</feature>
<feature type="strand" evidence="47">
    <location>
        <begin position="1018"/>
        <end position="1024"/>
    </location>
</feature>
<feature type="strand" evidence="47">
    <location>
        <begin position="1027"/>
        <end position="1033"/>
    </location>
</feature>
<feature type="strand" evidence="47">
    <location>
        <begin position="1044"/>
        <end position="1052"/>
    </location>
</feature>
<feature type="strand" evidence="47">
    <location>
        <begin position="1067"/>
        <end position="1078"/>
    </location>
</feature>
<feature type="helix" evidence="47">
    <location>
        <begin position="1082"/>
        <end position="1091"/>
    </location>
</feature>
<feature type="strand" evidence="47">
    <location>
        <begin position="1103"/>
        <end position="1105"/>
    </location>
</feature>
<feature type="strand" evidence="46">
    <location>
        <begin position="1107"/>
        <end position="1109"/>
    </location>
</feature>
<feature type="strand" evidence="47">
    <location>
        <begin position="1111"/>
        <end position="1116"/>
    </location>
</feature>
<feature type="helix" evidence="47">
    <location>
        <begin position="1117"/>
        <end position="1119"/>
    </location>
</feature>
<feature type="strand" evidence="47">
    <location>
        <begin position="1122"/>
        <end position="1127"/>
    </location>
</feature>
<feature type="strand" evidence="47">
    <location>
        <begin position="1130"/>
        <end position="1135"/>
    </location>
</feature>
<feature type="strand" evidence="47">
    <location>
        <begin position="1148"/>
        <end position="1155"/>
    </location>
</feature>
<feature type="strand" evidence="47">
    <location>
        <begin position="1159"/>
        <end position="1161"/>
    </location>
</feature>
<feature type="strand" evidence="47">
    <location>
        <begin position="1167"/>
        <end position="1174"/>
    </location>
</feature>
<feature type="strand" evidence="47">
    <location>
        <begin position="1177"/>
        <end position="1183"/>
    </location>
</feature>
<feature type="strand" evidence="47">
    <location>
        <begin position="1191"/>
        <end position="1193"/>
    </location>
</feature>
<feature type="strand" evidence="47">
    <location>
        <begin position="1198"/>
        <end position="1205"/>
    </location>
</feature>
<feature type="helix" evidence="47">
    <location>
        <begin position="1212"/>
        <end position="1214"/>
    </location>
</feature>
<feature type="strand" evidence="47">
    <location>
        <begin position="1216"/>
        <end position="1222"/>
    </location>
</feature>
<feature type="strand" evidence="47">
    <location>
        <begin position="1227"/>
        <end position="1234"/>
    </location>
</feature>
<feature type="strand" evidence="47">
    <location>
        <begin position="1241"/>
        <end position="1252"/>
    </location>
</feature>
<feature type="strand" evidence="47">
    <location>
        <begin position="1261"/>
        <end position="1269"/>
    </location>
</feature>
<feature type="helix" evidence="47">
    <location>
        <begin position="1273"/>
        <end position="1276"/>
    </location>
</feature>
<feature type="helix" evidence="47">
    <location>
        <begin position="1280"/>
        <end position="1282"/>
    </location>
</feature>
<feature type="strand" evidence="47">
    <location>
        <begin position="1284"/>
        <end position="1288"/>
    </location>
</feature>
<comment type="function">
    <molecule>Botulinum neurotoxin type C</molecule>
    <text evidence="1 7 8 11 15 17 19 20 22 26 33">Botulinum toxin causes flaccid paralysis by inhibiting neurotransmitter (acetylcholine) release from the presynaptic membranes of nerve terminals of the eukaryotic host skeletal and autonomic nervous system, with frequent heart or respiratory failure (PubMed:16252491, PubMed:7901002, PubMed:8611567). Is unique among characterized BoNTs in having 2 substrates, syntaxin (STX) and SNAP25 (PubMed:17718519, PubMed:7737992, PubMed:7901002, PubMed:8611567, PubMed:9886085). Precursor of botulinum neurotoxin C which unlike most BoNTs seems not to have a proteinaceous coreceptor, and instead recognizes 2 different complex polysialylated gangliosides found on neural tissue probably found in synaptic vesicles (PubMed:21483489, PubMed:23027864). Upon synaptic vesicle recycling the toxin is taken up via the endocytic pathway. When the pH of the toxin-containing endosome drops a structural rearrangement occurs so that the N-terminus of the heavy chain (HC) forms pores that allows the light chain (LC) to translocate into the cytosol (By similarity). Once in the cytosol the disulfide bond linking the 2 subunits is reduced and LC cleaves its target protein on synaptic vesicles, preventing their fusion with the cytoplasmic membrane and thus neurotransmitter release (By similarity). In vitro the whole toxin only has protease activity after reduction (PubMed:8611567). Electrical stimulation increases uptake of toxin, presumably by transiently exposing a receptor usually found in eukaryotic target synaptic vesicles (PubMed:19650874). Forms ion-conducting channels at around pH 6.1 (PubMed:2424493). Requires complex eukaryotic host polysialogangliosides for full neurotoxicity (PubMed:19650874, PubMed:21483489). Synaptic vesicle glycoproteins (SV2) do not seem to act as its receptor (PubMed:21483489).</text>
</comment>
<comment type="function">
    <molecule>Botulinum neurotoxin C light chain</molecule>
    <text evidence="7 17 19 20 22">Has proteolytic activity. After translocation into the eukaryotic host cytosol, inhibits neurotransmitter release by acting as a zinc endopeptidase that cleaves syntaxin-1A/STX1A and syntaxin-1B/STX1B (PubMed:7737992, PubMed:7901002, PubMed:8611567). Cleaves the '253-Arg-|-Ala-254' bond of STX1 and the '252-Arg-|-Ala-253' bond of STX2; also acts on syntaxin 3 (STX3) but not 4 (STX4) (PubMed:7737992). Cleaves the '198-Arg-|-Ala-199' bond of SNAP25 (PubMed:17718519, PubMed:8611567, PubMed:9886085). Recognizes the '93-Asn--Met-202' region of SNAP25 (PubMed:9886085).</text>
</comment>
<comment type="function">
    <molecule>Botulinum neurotoxin C heavy chain</molecule>
    <text evidence="1 5 8 10 12 13 14 34">Responsible for host epithelial cell transcytosis, host nerve cell targeting and translocation of light chain (LC) into eukaryotic host cytosol. Composed of 3 subdomains; the translocation domain (TD), and N-terminus and C-terminus of the receptor-binding domain (RBD). The RBD is responsible for the adherence of the toxin to the eukaryotic target cell surface. It simultaneously recognizes 2 polysialated gangliosides coreceptors in close proximity on host synaptic vesicles (PubMed:21542861, PubMed:23027864). The N-terminus of the TD wraps an extended belt around the perimeter of the LC, protecting Zn(2+) in the active site; it may also prevent premature LC dissociation from the translocation channel and protect toxin prior to translocation (By similarity). The TD inserts into synaptic vesicle membrane to allow translocation into the host cytosol (Probable). The C-terminal half of the HC (residues 864-1291) binds neurons in a dose-dependent manner (PubMed:20731382). The C-terminal half of the HC (residues 863-1291) binds eukaryotic host gangliosides in the order GD1b &gt; GT1b &gt; GD1a &gt; GM1a (PubMed:16115873, PubMed:19650874, PubMed:20731382, PubMed:23027864). Has 2 ganglioside binding sites; Sia-1 prefers a sia7 sialic acid and sugars within the ganglioside (GD1b &gt; GT1b), whereas GBP2 recognizes a sia5 sialic acid (GT1b and GD1a) (PubMed:21542861, PubMed:23027864). Both sites are required for HC to enter neurons, acting via different gangliosides (PubMed:23027864). This suggests that 2 gangliosides serve as toxin receptors (PubMed:16115873, PubMed:20731382, PubMed:21542861, PubMed:23027864). Synaptic activity (depolarization with K(+)) increases uptake by neurons (PubMed:23027864). Treatment of synaptosomes with proteinase K does not reduce HC binding, suggesting there is no protein receptor or it is protected from extracellular proteases (PubMed:16115873). Decreases uptake and toxicity of whole BoNT/A, but also interferes with uptake of BoNT/E and BoNT/F (PubMed:19650874). HC also binds phosphoinositides, which might play a role in membrane-binding (PubMed:22120109).</text>
</comment>
<comment type="catalytic activity">
    <reaction evidence="17 20 22">
        <text>Limited hydrolysis of proteins of the neuroexocytosis apparatus, synaptobrevins, SNAP25 or syntaxin. No detected action on small molecule substrates.</text>
        <dbReference type="EC" id="3.4.24.69"/>
    </reaction>
</comment>
<comment type="cofactor">
    <cofactor evidence="7 17">
        <name>Zn(2+)</name>
        <dbReference type="ChEBI" id="CHEBI:29105"/>
    </cofactor>
    <text evidence="7 17">Binds 2 zinc ions per subunit (PubMed:7737992). The catalytic Zn(2+) is bound by LC, the other Zn(2+) must bind to another region (PubMed:17718519).</text>
</comment>
<comment type="activity regulation">
    <text evidence="17 19 20">1,10-phenanthroline, EDTA and partially captopril block cleavage of syntaxin in brain synaptosomes (PubMed:7737992, PubMed:7901002). Treatment of synaptosomes with a mild detergent also inhibits cleavage (PubMed:7737992). 1,10-phenanthroline partially antagonizes inhibitions of neurotransmitter release (PubMed:8611567).</text>
</comment>
<comment type="biophysicochemical properties">
    <kinetics>
        <KM evidence="7">18.6 uM for purified SNAP25 with isolated botulinum neurotoxin C light chain</KM>
        <text evidence="7">kcat is 0.391 min(-1), for isolated botulinum neurotoxin C light chain.</text>
    </kinetics>
</comment>
<comment type="subunit">
    <text evidence="3 6 17 18 19 20">Heterodimer; disulfide-linked heterodimer of a light chain (LC) and a heavy chain (HC) (PubMed:16252491). The LC has the proteolytic/pharmacological activity (PubMed:7737992, PubMed:7901002, PubMed:8611567). The N- and C-terminal of the HC mediate channel formation and toxin binding, respectively. Can also be purified in complex with a non-toxic component that is larger than the HC (PubMed:16252491, PubMed:7802661). The stoichiometry of the whole complex has been modeled as one BoNT/C, one NTNHA, three HA-70, six HA-33 and three HA-17 (By similarity).</text>
</comment>
<comment type="subcellular location">
    <molecule>Botulinum neurotoxin type C</molecule>
    <subcellularLocation>
        <location evidence="6">Secreted</location>
    </subcellularLocation>
</comment>
<comment type="subcellular location">
    <molecule>Botulinum neurotoxin C light chain</molecule>
    <subcellularLocation>
        <location evidence="6 18">Secreted</location>
    </subcellularLocation>
    <text evidence="27 35 36 37 38">In animals that have ingested BoNT/C the LC acts in the eukaryotic host cytosol (PubMed:17718519, PubMed:7737992, PubMed:7901002, PubMed:8611567, PubMed:9886085).</text>
</comment>
<comment type="subcellular location">
    <molecule>Botulinum neurotoxin C heavy chain</molecule>
    <subcellularLocation>
        <location evidence="6 18">Secreted</location>
    </subcellularLocation>
    <text evidence="14 34">Upon incubation with cultured neurons the HC is detected in a synaptophysin-positive intracellular compartment (probably host synaptic vesicles) (PubMed:23027864). It probably integrates into the eukaryotic host synaptic vesicle membrane (PubMed:2424493).</text>
</comment>
<comment type="domain">
    <molecule>Botulinum neurotoxin C light chain</molecule>
    <text evidence="7 17 19 20 22">Has proteolytic activity (PubMed:17718519, PubMed:7737992, PubMed:7901002, PubMed:8611567, PubMed:9886085).</text>
</comment>
<comment type="domain">
    <molecule>Botulinum neurotoxin C heavy chain</molecule>
    <text evidence="1 13">Has 3 functional domains; the translocation domain (TD) and the receptor-binding domain (RBD) which is further subdivided into N- and C-terminal domains (N-RBD and C-RBD). The N-terminus of the TD wraps an extended belt around the perimeter of the LC, protecting Zn(2+) in the active site and may be a pseudosubstrate inhibitor which serves as an intramolecular chaperone for the LC prior to its translocation into the host cytosol. The RBD binds transiently exposed coreceptors on the host presynaptic cell membrane (By similarity). Binds phosphoinositides, which might play a role in membrane-binding (PubMed:22120109).</text>
</comment>
<comment type="pharmaceutical">
    <text evidence="21">Has been used to treat human idiopathic facial hemispasm and blepharospasm; improvement is seen in 2-3 days and the effects last up to 12-13 weeks, making it a viable option in BoNT/A non-responders (PubMed:9086464).</text>
</comment>
<comment type="miscellaneous">
    <text>There are seven antigenically distinct forms of botulinum neurotoxin: Types A, B, C, D, E, F, and G; new subtypes are quite frequent. Types C and D can undergo domain swapping to create hybrid types.</text>
</comment>
<comment type="miscellaneous">
    <text evidence="1">Botulism poisoning is usually food-borne, either by ingesting toxin or bacterial-contaminated food, or less frequently by inhalation poisoning. In both cases the neurotoxin binds to the apical surface of epithelial cells in the gut or airway. Toxin undergoes receptor-mediated endocytosis (using a different receptor than on target nerve cells), transcytosis across the epithelial cells and release into the general circulation. Once in the general circulation it binds to its target cells.</text>
</comment>
<comment type="miscellaneous">
    <text evidence="29 31 32 38">Botulinum neurotoxin type C is synthesized by C strains of C.botulinum which carry the appropriate bacteriophage.</text>
</comment>
<comment type="miscellaneous">
    <text evidence="6 9 25">Strain CB-19 was isolated from mink (PubMed:16252491). BoNT/C usually causes animal and avian botulism; it is less toxic to chicken than is BoNT/CD (PubMed:16115873). One case of human infant botulism caused by this serotype is known (PubMed:1978909).</text>
</comment>
<comment type="miscellaneous">
    <text evidence="24">This protein can also be encoded on a prophage.</text>
</comment>
<comment type="similarity">
    <text evidence="24">Belongs to the peptidase M27 family.</text>
</comment>
<comment type="online information" name="BotDB - A Database Resource for Clostridial Neurotoxins">
    <link uri="https://botdb.abcc.ncifcrf.gov/"/>
</comment>
<accession>P18640</accession>
<proteinExistence type="evidence at protein level"/>
<keyword id="KW-0002">3D-structure</keyword>
<keyword id="KW-0903">Direct protein sequencing</keyword>
<keyword id="KW-1015">Disulfide bond</keyword>
<keyword id="KW-0378">Hydrolase</keyword>
<keyword id="KW-0446">Lipid-binding</keyword>
<keyword id="KW-0479">Metal-binding</keyword>
<keyword id="KW-0482">Metalloprotease</keyword>
<keyword id="KW-0528">Neurotoxin</keyword>
<keyword id="KW-0582">Pharmaceutical</keyword>
<keyword id="KW-0645">Protease</keyword>
<keyword id="KW-0964">Secreted</keyword>
<keyword id="KW-0800">Toxin</keyword>
<keyword id="KW-0843">Virulence</keyword>
<keyword id="KW-0862">Zinc</keyword>
<evidence type="ECO:0000250" key="1">
    <source>
        <dbReference type="UniProtKB" id="P0DPI0"/>
    </source>
</evidence>
<evidence type="ECO:0000250" key="2">
    <source>
        <dbReference type="UniProtKB" id="P10844"/>
    </source>
</evidence>
<evidence type="ECO:0000250" key="3">
    <source>
        <dbReference type="UniProtKB" id="P19321"/>
    </source>
</evidence>
<evidence type="ECO:0000255" key="4">
    <source>
        <dbReference type="PROSITE-ProRule" id="PRU10095"/>
    </source>
</evidence>
<evidence type="ECO:0000269" key="5">
    <source>
    </source>
</evidence>
<evidence type="ECO:0000269" key="6">
    <source>
    </source>
</evidence>
<evidence type="ECO:0000269" key="7">
    <source>
    </source>
</evidence>
<evidence type="ECO:0000269" key="8">
    <source>
    </source>
</evidence>
<evidence type="ECO:0000269" key="9">
    <source>
    </source>
</evidence>
<evidence type="ECO:0000269" key="10">
    <source>
    </source>
</evidence>
<evidence type="ECO:0000269" key="11">
    <source>
    </source>
</evidence>
<evidence type="ECO:0000269" key="12">
    <source>
    </source>
</evidence>
<evidence type="ECO:0000269" key="13">
    <source>
    </source>
</evidence>
<evidence type="ECO:0000269" key="14">
    <source>
    </source>
</evidence>
<evidence type="ECO:0000269" key="15">
    <source>
    </source>
</evidence>
<evidence type="ECO:0000269" key="16">
    <source>
    </source>
</evidence>
<evidence type="ECO:0000269" key="17">
    <source>
    </source>
</evidence>
<evidence type="ECO:0000269" key="18">
    <source>
    </source>
</evidence>
<evidence type="ECO:0000269" key="19">
    <source>
    </source>
</evidence>
<evidence type="ECO:0000269" key="20">
    <source>
    </source>
</evidence>
<evidence type="ECO:0000269" key="21">
    <source>
    </source>
</evidence>
<evidence type="ECO:0000269" key="22">
    <source>
    </source>
</evidence>
<evidence type="ECO:0000303" key="23">
    <source>
    </source>
</evidence>
<evidence type="ECO:0000305" key="24"/>
<evidence type="ECO:0000305" key="25">
    <source>
    </source>
</evidence>
<evidence type="ECO:0000305" key="26">
    <source>
    </source>
</evidence>
<evidence type="ECO:0000305" key="27">
    <source>
    </source>
</evidence>
<evidence type="ECO:0000305" key="28">
    <source>
    </source>
</evidence>
<evidence type="ECO:0000305" key="29">
    <source>
    </source>
</evidence>
<evidence type="ECO:0000305" key="30">
    <source>
    </source>
</evidence>
<evidence type="ECO:0000305" key="31">
    <source>
    </source>
</evidence>
<evidence type="ECO:0000305" key="32">
    <source>
    </source>
</evidence>
<evidence type="ECO:0000305" key="33">
    <source>
    </source>
</evidence>
<evidence type="ECO:0000305" key="34">
    <source>
    </source>
</evidence>
<evidence type="ECO:0000305" key="35">
    <source>
    </source>
</evidence>
<evidence type="ECO:0000305" key="36">
    <source>
    </source>
</evidence>
<evidence type="ECO:0000305" key="37">
    <source>
    </source>
</evidence>
<evidence type="ECO:0000305" key="38">
    <source>
    </source>
</evidence>
<evidence type="ECO:0007744" key="39">
    <source>
        <dbReference type="PDB" id="2QN0"/>
    </source>
</evidence>
<evidence type="ECO:0007744" key="40">
    <source>
        <dbReference type="PDB" id="3DEB"/>
    </source>
</evidence>
<evidence type="ECO:0007744" key="41">
    <source>
        <dbReference type="PDB" id="3N7K"/>
    </source>
</evidence>
<evidence type="ECO:0007744" key="42">
    <source>
        <dbReference type="PDB" id="3R4S"/>
    </source>
</evidence>
<evidence type="ECO:0007744" key="43">
    <source>
        <dbReference type="PDB" id="3R4U"/>
    </source>
</evidence>
<evidence type="ECO:0007829" key="44">
    <source>
        <dbReference type="PDB" id="2QN0"/>
    </source>
</evidence>
<evidence type="ECO:0007829" key="45">
    <source>
        <dbReference type="PDB" id="3DEB"/>
    </source>
</evidence>
<evidence type="ECO:0007829" key="46">
    <source>
        <dbReference type="PDB" id="3N7K"/>
    </source>
</evidence>
<evidence type="ECO:0007829" key="47">
    <source>
        <dbReference type="PDB" id="3R4S"/>
    </source>
</evidence>
<organismHost>
    <name type="scientific">Clostridium botulinum C</name>
    <dbReference type="NCBI Taxonomy" id="36828"/>
</organismHost>
<dbReference type="EC" id="3.4.24.69" evidence="17"/>
<dbReference type="EMBL" id="X66433">
    <property type="protein sequence ID" value="CAA47060.1"/>
    <property type="molecule type" value="Genomic_DNA"/>
</dbReference>
<dbReference type="EMBL" id="X72793">
    <property type="protein sequence ID" value="CAA51313.1"/>
    <property type="molecule type" value="Genomic_DNA"/>
</dbReference>
<dbReference type="EMBL" id="X53751">
    <property type="protein sequence ID" value="CAA37780.1"/>
    <property type="molecule type" value="Genomic_DNA"/>
</dbReference>
<dbReference type="EMBL" id="D90210">
    <property type="protein sequence ID" value="BAA14235.1"/>
    <property type="molecule type" value="Genomic_DNA"/>
</dbReference>
<dbReference type="EMBL" id="X62389">
    <property type="protein sequence ID" value="CAA44263.1"/>
    <property type="molecule type" value="Genomic_DNA"/>
</dbReference>
<dbReference type="EMBL" id="AB200358">
    <property type="protein sequence ID" value="BAD90566.1"/>
    <property type="molecule type" value="Genomic_DNA"/>
</dbReference>
<dbReference type="RefSeq" id="YP_398516.1">
    <property type="nucleotide sequence ID" value="NC_007581.1"/>
</dbReference>
<dbReference type="PDB" id="2QN0">
    <property type="method" value="X-ray"/>
    <property type="resolution" value="1.75 A"/>
    <property type="chains" value="A=1-427"/>
</dbReference>
<dbReference type="PDB" id="3DEB">
    <property type="method" value="X-ray"/>
    <property type="resolution" value="1.95 A"/>
    <property type="chains" value="A=1-430"/>
</dbReference>
<dbReference type="PDB" id="3N7K">
    <property type="method" value="X-ray"/>
    <property type="resolution" value="2.50 A"/>
    <property type="chains" value="A/B=866-1291"/>
</dbReference>
<dbReference type="PDB" id="3R4S">
    <property type="method" value="X-ray"/>
    <property type="resolution" value="2.15 A"/>
    <property type="chains" value="A/B=867-1291"/>
</dbReference>
<dbReference type="PDB" id="3R4U">
    <property type="method" value="X-ray"/>
    <property type="resolution" value="2.20 A"/>
    <property type="chains" value="A/B=867-1291"/>
</dbReference>
<dbReference type="PDBsum" id="2QN0"/>
<dbReference type="PDBsum" id="3DEB"/>
<dbReference type="PDBsum" id="3N7K"/>
<dbReference type="PDBsum" id="3R4S"/>
<dbReference type="PDBsum" id="3R4U"/>
<dbReference type="SMR" id="P18640"/>
<dbReference type="DrugBank" id="DB13898">
    <property type="generic name" value="Equine Botulinum Neurotoxin C Immune FAB2"/>
</dbReference>
<dbReference type="UniLectin" id="P18640"/>
<dbReference type="GeneID" id="3772941"/>
<dbReference type="KEGG" id="vg:3772941"/>
<dbReference type="BRENDA" id="3.4.24.69">
    <property type="organism ID" value="1462"/>
</dbReference>
<dbReference type="Reactome" id="R-HSA-5250971">
    <property type="pathway name" value="Toxicity of botulinum toxin type C (botC)"/>
</dbReference>
<dbReference type="EvolutionaryTrace" id="P18640"/>
<dbReference type="GO" id="GO:0005576">
    <property type="term" value="C:extracellular region"/>
    <property type="evidence" value="ECO:0007669"/>
    <property type="project" value="UniProtKB-SubCell"/>
</dbReference>
<dbReference type="GO" id="GO:0035594">
    <property type="term" value="F:ganglioside binding"/>
    <property type="evidence" value="ECO:0000314"/>
    <property type="project" value="UniProtKB"/>
</dbReference>
<dbReference type="GO" id="GO:0004222">
    <property type="term" value="F:metalloendopeptidase activity"/>
    <property type="evidence" value="ECO:0007669"/>
    <property type="project" value="UniProtKB-EC"/>
</dbReference>
<dbReference type="GO" id="GO:0008320">
    <property type="term" value="F:protein transmembrane transporter activity"/>
    <property type="evidence" value="ECO:0007669"/>
    <property type="project" value="InterPro"/>
</dbReference>
<dbReference type="GO" id="GO:0090729">
    <property type="term" value="F:toxin activity"/>
    <property type="evidence" value="ECO:0000314"/>
    <property type="project" value="UniProtKB"/>
</dbReference>
<dbReference type="GO" id="GO:0008270">
    <property type="term" value="F:zinc ion binding"/>
    <property type="evidence" value="ECO:0000314"/>
    <property type="project" value="UniProtKB"/>
</dbReference>
<dbReference type="GO" id="GO:0033619">
    <property type="term" value="P:membrane protein proteolysis"/>
    <property type="evidence" value="ECO:0000314"/>
    <property type="project" value="CACAO"/>
</dbReference>
<dbReference type="GO" id="GO:0045955">
    <property type="term" value="P:negative regulation of calcium ion-dependent exocytosis"/>
    <property type="evidence" value="ECO:0000314"/>
    <property type="project" value="CACAO"/>
</dbReference>
<dbReference type="GO" id="GO:0044762">
    <property type="term" value="P:symbiont-mediated suppression of host neurotransmitter secretion"/>
    <property type="evidence" value="ECO:0000314"/>
    <property type="project" value="UniProtKB"/>
</dbReference>
<dbReference type="CDD" id="cd23390">
    <property type="entry name" value="Toxin_R_bind_C_BoNTC"/>
    <property type="match status" value="1"/>
</dbReference>
<dbReference type="FunFam" id="2.60.120.200:FF:000184">
    <property type="entry name" value="Botulinum neurotoxin type A"/>
    <property type="match status" value="1"/>
</dbReference>
<dbReference type="FunFam" id="1.20.1120.10:FF:000002">
    <property type="entry name" value="Botulinum neurotoxin type D"/>
    <property type="match status" value="1"/>
</dbReference>
<dbReference type="Gene3D" id="2.60.120.200">
    <property type="match status" value="1"/>
</dbReference>
<dbReference type="Gene3D" id="2.80.10.50">
    <property type="match status" value="1"/>
</dbReference>
<dbReference type="Gene3D" id="1.20.1120.10">
    <property type="entry name" value="Clostridium botulinum neurotoxin b, 'coiled-coil' domain"/>
    <property type="match status" value="1"/>
</dbReference>
<dbReference type="Gene3D" id="3.90.1240.10">
    <property type="entry name" value="Metalloproteases ('zincins'), catalytic domain like"/>
    <property type="match status" value="1"/>
</dbReference>
<dbReference type="InterPro" id="IPR000395">
    <property type="entry name" value="Bot/tetX_LC"/>
</dbReference>
<dbReference type="InterPro" id="IPR036248">
    <property type="entry name" value="Clostridium_toxin_transloc"/>
</dbReference>
<dbReference type="InterPro" id="IPR013320">
    <property type="entry name" value="ConA-like_dom_sf"/>
</dbReference>
<dbReference type="InterPro" id="IPR011065">
    <property type="entry name" value="Kunitz_inhibitor_STI-like_sf"/>
</dbReference>
<dbReference type="InterPro" id="IPR013104">
    <property type="entry name" value="Toxin_rcpt-bd_C"/>
</dbReference>
<dbReference type="InterPro" id="IPR012928">
    <property type="entry name" value="Toxin_rcpt-bd_N"/>
</dbReference>
<dbReference type="InterPro" id="IPR012500">
    <property type="entry name" value="Toxin_trans"/>
</dbReference>
<dbReference type="Pfam" id="PF01742">
    <property type="entry name" value="Peptidase_M27"/>
    <property type="match status" value="1"/>
</dbReference>
<dbReference type="Pfam" id="PF07951">
    <property type="entry name" value="Toxin_R_bind_C"/>
    <property type="match status" value="1"/>
</dbReference>
<dbReference type="Pfam" id="PF07953">
    <property type="entry name" value="Toxin_R_bind_N"/>
    <property type="match status" value="1"/>
</dbReference>
<dbReference type="Pfam" id="PF07952">
    <property type="entry name" value="Toxin_trans"/>
    <property type="match status" value="1"/>
</dbReference>
<dbReference type="PRINTS" id="PR00760">
    <property type="entry name" value="BONTOXILYSIN"/>
</dbReference>
<dbReference type="SUPFAM" id="SSF58091">
    <property type="entry name" value="Clostridium neurotoxins, 'coiled-coil' domain"/>
    <property type="match status" value="1"/>
</dbReference>
<dbReference type="SUPFAM" id="SSF49899">
    <property type="entry name" value="Concanavalin A-like lectins/glucanases"/>
    <property type="match status" value="1"/>
</dbReference>
<dbReference type="SUPFAM" id="SSF55486">
    <property type="entry name" value="Metalloproteases ('zincins'), catalytic domain"/>
    <property type="match status" value="1"/>
</dbReference>
<dbReference type="SUPFAM" id="SSF50386">
    <property type="entry name" value="STI-like"/>
    <property type="match status" value="1"/>
</dbReference>
<dbReference type="PROSITE" id="PS00142">
    <property type="entry name" value="ZINC_PROTEASE"/>
    <property type="match status" value="1"/>
</dbReference>
<name>BXC_CBCP</name>